<protein>
    <recommendedName>
        <fullName evidence="6">XK-related protein 5</fullName>
    </recommendedName>
</protein>
<proteinExistence type="evidence at transcript level"/>
<dbReference type="EMBL" id="AY534251">
    <property type="protein sequence ID" value="AAT07100.1"/>
    <property type="molecule type" value="mRNA"/>
</dbReference>
<dbReference type="CCDS" id="CCDS52495.1"/>
<dbReference type="RefSeq" id="NP_001106821.1">
    <property type="nucleotide sequence ID" value="NM_001113350.2"/>
</dbReference>
<dbReference type="RefSeq" id="NP_001273398.1">
    <property type="nucleotide sequence ID" value="NM_001286469.1"/>
</dbReference>
<dbReference type="RefSeq" id="NP_795925.1">
    <property type="nucleotide sequence ID" value="NM_176951.5"/>
</dbReference>
<dbReference type="SMR" id="Q5GH66"/>
<dbReference type="FunCoup" id="Q5GH66">
    <property type="interactions" value="850"/>
</dbReference>
<dbReference type="STRING" id="10090.ENSMUSP00000093089"/>
<dbReference type="GlyGen" id="Q5GH66">
    <property type="glycosylation" value="1 site"/>
</dbReference>
<dbReference type="iPTMnet" id="Q5GH66"/>
<dbReference type="PhosphoSitePlus" id="Q5GH66"/>
<dbReference type="PaxDb" id="10090-ENSMUSP00000093089"/>
<dbReference type="ProteomicsDB" id="299708"/>
<dbReference type="Antibodypedia" id="74670">
    <property type="antibodies" value="8 antibodies from 4 providers"/>
</dbReference>
<dbReference type="Ensembl" id="ENSMUST00000095438.10">
    <property type="protein sequence ID" value="ENSMUSP00000093089.4"/>
    <property type="gene ID" value="ENSMUSG00000039814.16"/>
</dbReference>
<dbReference type="GeneID" id="319581"/>
<dbReference type="KEGG" id="mmu:319581"/>
<dbReference type="UCSC" id="uc009kzw.3">
    <property type="organism name" value="mouse"/>
</dbReference>
<dbReference type="AGR" id="MGI:2442327"/>
<dbReference type="CTD" id="389610"/>
<dbReference type="MGI" id="MGI:2442327">
    <property type="gene designation" value="Xkr5"/>
</dbReference>
<dbReference type="VEuPathDB" id="HostDB:ENSMUSG00000039814"/>
<dbReference type="eggNOG" id="KOG4790">
    <property type="taxonomic scope" value="Eukaryota"/>
</dbReference>
<dbReference type="GeneTree" id="ENSGT01120000271929"/>
<dbReference type="HOGENOM" id="CLU_025738_1_0_1"/>
<dbReference type="InParanoid" id="Q5GH66"/>
<dbReference type="OMA" id="VDSTCHW"/>
<dbReference type="OrthoDB" id="6348184at2759"/>
<dbReference type="PhylomeDB" id="Q5GH66"/>
<dbReference type="TreeFam" id="TF316454"/>
<dbReference type="BioGRID-ORCS" id="319581">
    <property type="hits" value="2 hits in 75 CRISPR screens"/>
</dbReference>
<dbReference type="PRO" id="PR:Q5GH66"/>
<dbReference type="Proteomes" id="UP000000589">
    <property type="component" value="Chromosome 8"/>
</dbReference>
<dbReference type="RNAct" id="Q5GH66">
    <property type="molecule type" value="protein"/>
</dbReference>
<dbReference type="Bgee" id="ENSMUSG00000039814">
    <property type="expression patterns" value="Expressed in epiblast (generic) and 55 other cell types or tissues"/>
</dbReference>
<dbReference type="ExpressionAtlas" id="Q5GH66">
    <property type="expression patterns" value="baseline and differential"/>
</dbReference>
<dbReference type="GO" id="GO:0005886">
    <property type="term" value="C:plasma membrane"/>
    <property type="evidence" value="ECO:0000314"/>
    <property type="project" value="UniProtKB"/>
</dbReference>
<dbReference type="InterPro" id="IPR018629">
    <property type="entry name" value="XK-rel"/>
</dbReference>
<dbReference type="InterPro" id="IPR050895">
    <property type="entry name" value="XK-related_scramblase"/>
</dbReference>
<dbReference type="PANTHER" id="PTHR16024">
    <property type="entry name" value="XK-RELATED PROTEIN"/>
    <property type="match status" value="1"/>
</dbReference>
<dbReference type="PANTHER" id="PTHR16024:SF15">
    <property type="entry name" value="XK-RELATED PROTEIN 5"/>
    <property type="match status" value="1"/>
</dbReference>
<dbReference type="Pfam" id="PF09815">
    <property type="entry name" value="XK-related"/>
    <property type="match status" value="1"/>
</dbReference>
<sequence>MHAGLLGLSALLQAAEQSARLCSIVFYFATGRLLWGWLALSVLLPGFLVQALSFLWFRADGHQGQWWLAVLHLLQLGVWKRHWDSVATALWKGKEAPSWGQLHLQEADLSALRLLEALLQTGPHLLLQAYVFLASDFTDIVPGISALLSWSSLSWALVSYNRFLGIMKPGHHTMLWAALLCQQLWRMGMLGARVLSLVLFCRVYRVWVLVVGGAHWLVMTFWLVAQQSDIVESTCHWRLFNLLVGAVFILCYINFWDSPSRSRVASFYLVMLLENSILLLLATDFLQGVPGTSLWTVVGVLSGFLIGCASLVIYYSLLHPKSSDIQQSFMRKCCGPIEDNKPESEPPPRAVDPTGEMPDSSSWCQEESYELTSLDKAPSPEQNTAEVGLGEQRSGESSFFSHHHWLLLKLALKTGSVSRINAALGGDSPGCSCPPLLGSSQHCDLQRKPLFSHQDLPSSPCDPLTLEKGSEYVGAPKAEMESLETSSYLSFASELEDNATTQKPPATQEDSPKLAGSKADLAAQGKETEGPLQGKEGQESTTLYFSAAMDRTTSHQRGSPVVLRISHSETLVESRPGQPALPQAVTKPFPVTVANISPIPGRNFRPSAELPGRAPDSSECEEWKDAARDPSMQSSLPKMRLKAAEEPCFTSTPKSESIQRDYSCRDRVRQEMSFFI</sequence>
<accession>Q5GH66</accession>
<keyword id="KW-1003">Cell membrane</keyword>
<keyword id="KW-0472">Membrane</keyword>
<keyword id="KW-1185">Reference proteome</keyword>
<keyword id="KW-0812">Transmembrane</keyword>
<keyword id="KW-1133">Transmembrane helix</keyword>
<gene>
    <name evidence="4 7" type="primary">Xkr5</name>
    <name evidence="5" type="synonym">Xrg5</name>
</gene>
<comment type="subcellular location">
    <subcellularLocation>
        <location evidence="3">Cell membrane</location>
        <topology evidence="1">Multi-pass membrane protein</topology>
    </subcellularLocation>
</comment>
<comment type="similarity">
    <text evidence="6">Belongs to the XK family.</text>
</comment>
<evidence type="ECO:0000255" key="1"/>
<evidence type="ECO:0000256" key="2">
    <source>
        <dbReference type="SAM" id="MobiDB-lite"/>
    </source>
</evidence>
<evidence type="ECO:0000269" key="3">
    <source>
    </source>
</evidence>
<evidence type="ECO:0000303" key="4">
    <source>
    </source>
</evidence>
<evidence type="ECO:0000303" key="5">
    <source ref="1"/>
</evidence>
<evidence type="ECO:0000305" key="6"/>
<evidence type="ECO:0000312" key="7">
    <source>
        <dbReference type="MGI" id="MGI:2442327"/>
    </source>
</evidence>
<organism>
    <name type="scientific">Mus musculus</name>
    <name type="common">Mouse</name>
    <dbReference type="NCBI Taxonomy" id="10090"/>
    <lineage>
        <taxon>Eukaryota</taxon>
        <taxon>Metazoa</taxon>
        <taxon>Chordata</taxon>
        <taxon>Craniata</taxon>
        <taxon>Vertebrata</taxon>
        <taxon>Euteleostomi</taxon>
        <taxon>Mammalia</taxon>
        <taxon>Eutheria</taxon>
        <taxon>Euarchontoglires</taxon>
        <taxon>Glires</taxon>
        <taxon>Rodentia</taxon>
        <taxon>Myomorpha</taxon>
        <taxon>Muroidea</taxon>
        <taxon>Muridae</taxon>
        <taxon>Murinae</taxon>
        <taxon>Mus</taxon>
        <taxon>Mus</taxon>
    </lineage>
</organism>
<feature type="chain" id="PRO_0000190783" description="XK-related protein 5">
    <location>
        <begin position="1"/>
        <end position="676"/>
    </location>
</feature>
<feature type="transmembrane region" description="Helical" evidence="1">
    <location>
        <begin position="37"/>
        <end position="57"/>
    </location>
</feature>
<feature type="transmembrane region" description="Helical" evidence="1">
    <location>
        <begin position="114"/>
        <end position="134"/>
    </location>
</feature>
<feature type="transmembrane region" description="Helical" evidence="1">
    <location>
        <begin position="140"/>
        <end position="160"/>
    </location>
</feature>
<feature type="transmembrane region" description="Helical" evidence="1">
    <location>
        <begin position="206"/>
        <end position="226"/>
    </location>
</feature>
<feature type="transmembrane region" description="Helical" evidence="1">
    <location>
        <begin position="239"/>
        <end position="259"/>
    </location>
</feature>
<feature type="transmembrane region" description="Helical" evidence="1">
    <location>
        <begin position="266"/>
        <end position="286"/>
    </location>
</feature>
<feature type="transmembrane region" description="Helical" evidence="1">
    <location>
        <begin position="294"/>
        <end position="314"/>
    </location>
</feature>
<feature type="region of interest" description="Disordered" evidence="2">
    <location>
        <begin position="336"/>
        <end position="362"/>
    </location>
</feature>
<feature type="region of interest" description="Disordered" evidence="2">
    <location>
        <begin position="372"/>
        <end position="391"/>
    </location>
</feature>
<feature type="region of interest" description="Disordered" evidence="2">
    <location>
        <begin position="495"/>
        <end position="538"/>
    </location>
</feature>
<feature type="region of interest" description="Disordered" evidence="2">
    <location>
        <begin position="598"/>
        <end position="661"/>
    </location>
</feature>
<feature type="compositionally biased region" description="Polar residues" evidence="2">
    <location>
        <begin position="498"/>
        <end position="509"/>
    </location>
</feature>
<name>XKR5_MOUSE</name>
<reference key="1">
    <citation type="submission" date="2004-01" db="EMBL/GenBank/DDBJ databases">
        <title>A superfamily of XK-related genes (XRG) widely expressed in vertebrates and invertebrates.</title>
        <authorList>
            <person name="Huang C.-H."/>
            <person name="Chen Y."/>
        </authorList>
    </citation>
    <scope>NUCLEOTIDE SEQUENCE [MRNA]</scope>
    <source>
        <strain>C57BL/6J</strain>
    </source>
</reference>
<reference key="2">
    <citation type="journal article" date="2014" name="J. Biol. Chem.">
        <title>Exposure of phosphatidylserine by Xk-related protein family members during apoptosis.</title>
        <authorList>
            <person name="Suzuki J."/>
            <person name="Imanishi E."/>
            <person name="Nagata S."/>
        </authorList>
    </citation>
    <scope>SUBCELLULAR LOCATION</scope>
</reference>